<reference key="1">
    <citation type="submission" date="1999-12" db="EMBL/GenBank/DDBJ databases">
        <title>A novel gene expressed in the human adrenal gland.</title>
        <authorList>
            <person name="Fu S."/>
            <person name="Shi J."/>
            <person name="Ren S."/>
            <person name="Gu J."/>
            <person name="Jin W."/>
            <person name="Huang Q."/>
            <person name="Dong H."/>
            <person name="Yu Y."/>
            <person name="Fu G."/>
            <person name="Wang Y."/>
            <person name="Chen Z."/>
            <person name="Han Z."/>
        </authorList>
    </citation>
    <scope>NUCLEOTIDE SEQUENCE [LARGE SCALE MRNA]</scope>
    <source>
        <tissue>Adrenal gland</tissue>
    </source>
</reference>
<reference key="2">
    <citation type="journal article" date="2004" name="Nat. Genet.">
        <title>Complete sequencing and characterization of 21,243 full-length human cDNAs.</title>
        <authorList>
            <person name="Ota T."/>
            <person name="Suzuki Y."/>
            <person name="Nishikawa T."/>
            <person name="Otsuki T."/>
            <person name="Sugiyama T."/>
            <person name="Irie R."/>
            <person name="Wakamatsu A."/>
            <person name="Hayashi K."/>
            <person name="Sato H."/>
            <person name="Nagai K."/>
            <person name="Kimura K."/>
            <person name="Makita H."/>
            <person name="Sekine M."/>
            <person name="Obayashi M."/>
            <person name="Nishi T."/>
            <person name="Shibahara T."/>
            <person name="Tanaka T."/>
            <person name="Ishii S."/>
            <person name="Yamamoto J."/>
            <person name="Saito K."/>
            <person name="Kawai Y."/>
            <person name="Isono Y."/>
            <person name="Nakamura Y."/>
            <person name="Nagahari K."/>
            <person name="Murakami K."/>
            <person name="Yasuda T."/>
            <person name="Iwayanagi T."/>
            <person name="Wagatsuma M."/>
            <person name="Shiratori A."/>
            <person name="Sudo H."/>
            <person name="Hosoiri T."/>
            <person name="Kaku Y."/>
            <person name="Kodaira H."/>
            <person name="Kondo H."/>
            <person name="Sugawara M."/>
            <person name="Takahashi M."/>
            <person name="Kanda K."/>
            <person name="Yokoi T."/>
            <person name="Furuya T."/>
            <person name="Kikkawa E."/>
            <person name="Omura Y."/>
            <person name="Abe K."/>
            <person name="Kamihara K."/>
            <person name="Katsuta N."/>
            <person name="Sato K."/>
            <person name="Tanikawa M."/>
            <person name="Yamazaki M."/>
            <person name="Ninomiya K."/>
            <person name="Ishibashi T."/>
            <person name="Yamashita H."/>
            <person name="Murakawa K."/>
            <person name="Fujimori K."/>
            <person name="Tanai H."/>
            <person name="Kimata M."/>
            <person name="Watanabe M."/>
            <person name="Hiraoka S."/>
            <person name="Chiba Y."/>
            <person name="Ishida S."/>
            <person name="Ono Y."/>
            <person name="Takiguchi S."/>
            <person name="Watanabe S."/>
            <person name="Yosida M."/>
            <person name="Hotuta T."/>
            <person name="Kusano J."/>
            <person name="Kanehori K."/>
            <person name="Takahashi-Fujii A."/>
            <person name="Hara H."/>
            <person name="Tanase T.-O."/>
            <person name="Nomura Y."/>
            <person name="Togiya S."/>
            <person name="Komai F."/>
            <person name="Hara R."/>
            <person name="Takeuchi K."/>
            <person name="Arita M."/>
            <person name="Imose N."/>
            <person name="Musashino K."/>
            <person name="Yuuki H."/>
            <person name="Oshima A."/>
            <person name="Sasaki N."/>
            <person name="Aotsuka S."/>
            <person name="Yoshikawa Y."/>
            <person name="Matsunawa H."/>
            <person name="Ichihara T."/>
            <person name="Shiohata N."/>
            <person name="Sano S."/>
            <person name="Moriya S."/>
            <person name="Momiyama H."/>
            <person name="Satoh N."/>
            <person name="Takami S."/>
            <person name="Terashima Y."/>
            <person name="Suzuki O."/>
            <person name="Nakagawa S."/>
            <person name="Senoh A."/>
            <person name="Mizoguchi H."/>
            <person name="Goto Y."/>
            <person name="Shimizu F."/>
            <person name="Wakebe H."/>
            <person name="Hishigaki H."/>
            <person name="Watanabe T."/>
            <person name="Sugiyama A."/>
            <person name="Takemoto M."/>
            <person name="Kawakami B."/>
            <person name="Yamazaki M."/>
            <person name="Watanabe K."/>
            <person name="Kumagai A."/>
            <person name="Itakura S."/>
            <person name="Fukuzumi Y."/>
            <person name="Fujimori Y."/>
            <person name="Komiyama M."/>
            <person name="Tashiro H."/>
            <person name="Tanigami A."/>
            <person name="Fujiwara T."/>
            <person name="Ono T."/>
            <person name="Yamada K."/>
            <person name="Fujii Y."/>
            <person name="Ozaki K."/>
            <person name="Hirao M."/>
            <person name="Ohmori Y."/>
            <person name="Kawabata A."/>
            <person name="Hikiji T."/>
            <person name="Kobatake N."/>
            <person name="Inagaki H."/>
            <person name="Ikema Y."/>
            <person name="Okamoto S."/>
            <person name="Okitani R."/>
            <person name="Kawakami T."/>
            <person name="Noguchi S."/>
            <person name="Itoh T."/>
            <person name="Shigeta K."/>
            <person name="Senba T."/>
            <person name="Matsumura K."/>
            <person name="Nakajima Y."/>
            <person name="Mizuno T."/>
            <person name="Morinaga M."/>
            <person name="Sasaki M."/>
            <person name="Togashi T."/>
            <person name="Oyama M."/>
            <person name="Hata H."/>
            <person name="Watanabe M."/>
            <person name="Komatsu T."/>
            <person name="Mizushima-Sugano J."/>
            <person name="Satoh T."/>
            <person name="Shirai Y."/>
            <person name="Takahashi Y."/>
            <person name="Nakagawa K."/>
            <person name="Okumura K."/>
            <person name="Nagase T."/>
            <person name="Nomura N."/>
            <person name="Kikuchi H."/>
            <person name="Masuho Y."/>
            <person name="Yamashita R."/>
            <person name="Nakai K."/>
            <person name="Yada T."/>
            <person name="Nakamura Y."/>
            <person name="Ohara O."/>
            <person name="Isogai T."/>
            <person name="Sugano S."/>
        </authorList>
    </citation>
    <scope>NUCLEOTIDE SEQUENCE [LARGE SCALE MRNA]</scope>
</reference>
<reference key="3">
    <citation type="submission" date="2005-04" db="EMBL/GenBank/DDBJ databases">
        <authorList>
            <person name="Suzuki Y."/>
            <person name="Sugano S."/>
            <person name="Totoki Y."/>
            <person name="Toyoda A."/>
            <person name="Takeda T."/>
            <person name="Sakaki Y."/>
            <person name="Tanaka A."/>
            <person name="Yokoyama S."/>
        </authorList>
    </citation>
    <scope>NUCLEOTIDE SEQUENCE [LARGE SCALE MRNA]</scope>
    <source>
        <tissue>Small intestine</tissue>
    </source>
</reference>
<reference key="4">
    <citation type="journal article" date="2003" name="Nature">
        <title>The DNA sequence of human chromosome 7.</title>
        <authorList>
            <person name="Hillier L.W."/>
            <person name="Fulton R.S."/>
            <person name="Fulton L.A."/>
            <person name="Graves T.A."/>
            <person name="Pepin K.H."/>
            <person name="Wagner-McPherson C."/>
            <person name="Layman D."/>
            <person name="Maas J."/>
            <person name="Jaeger S."/>
            <person name="Walker R."/>
            <person name="Wylie K."/>
            <person name="Sekhon M."/>
            <person name="Becker M.C."/>
            <person name="O'Laughlin M.D."/>
            <person name="Schaller M.E."/>
            <person name="Fewell G.A."/>
            <person name="Delehaunty K.D."/>
            <person name="Miner T.L."/>
            <person name="Nash W.E."/>
            <person name="Cordes M."/>
            <person name="Du H."/>
            <person name="Sun H."/>
            <person name="Edwards J."/>
            <person name="Bradshaw-Cordum H."/>
            <person name="Ali J."/>
            <person name="Andrews S."/>
            <person name="Isak A."/>
            <person name="Vanbrunt A."/>
            <person name="Nguyen C."/>
            <person name="Du F."/>
            <person name="Lamar B."/>
            <person name="Courtney L."/>
            <person name="Kalicki J."/>
            <person name="Ozersky P."/>
            <person name="Bielicki L."/>
            <person name="Scott K."/>
            <person name="Holmes A."/>
            <person name="Harkins R."/>
            <person name="Harris A."/>
            <person name="Strong C.M."/>
            <person name="Hou S."/>
            <person name="Tomlinson C."/>
            <person name="Dauphin-Kohlberg S."/>
            <person name="Kozlowicz-Reilly A."/>
            <person name="Leonard S."/>
            <person name="Rohlfing T."/>
            <person name="Rock S.M."/>
            <person name="Tin-Wollam A.-M."/>
            <person name="Abbott A."/>
            <person name="Minx P."/>
            <person name="Maupin R."/>
            <person name="Strowmatt C."/>
            <person name="Latreille P."/>
            <person name="Miller N."/>
            <person name="Johnson D."/>
            <person name="Murray J."/>
            <person name="Woessner J.P."/>
            <person name="Wendl M.C."/>
            <person name="Yang S.-P."/>
            <person name="Schultz B.R."/>
            <person name="Wallis J.W."/>
            <person name="Spieth J."/>
            <person name="Bieri T.A."/>
            <person name="Nelson J.O."/>
            <person name="Berkowicz N."/>
            <person name="Wohldmann P.E."/>
            <person name="Cook L.L."/>
            <person name="Hickenbotham M.T."/>
            <person name="Eldred J."/>
            <person name="Williams D."/>
            <person name="Bedell J.A."/>
            <person name="Mardis E.R."/>
            <person name="Clifton S.W."/>
            <person name="Chissoe S.L."/>
            <person name="Marra M.A."/>
            <person name="Raymond C."/>
            <person name="Haugen E."/>
            <person name="Gillett W."/>
            <person name="Zhou Y."/>
            <person name="James R."/>
            <person name="Phelps K."/>
            <person name="Iadanoto S."/>
            <person name="Bubb K."/>
            <person name="Simms E."/>
            <person name="Levy R."/>
            <person name="Clendenning J."/>
            <person name="Kaul R."/>
            <person name="Kent W.J."/>
            <person name="Furey T.S."/>
            <person name="Baertsch R.A."/>
            <person name="Brent M.R."/>
            <person name="Keibler E."/>
            <person name="Flicek P."/>
            <person name="Bork P."/>
            <person name="Suyama M."/>
            <person name="Bailey J.A."/>
            <person name="Portnoy M.E."/>
            <person name="Torrents D."/>
            <person name="Chinwalla A.T."/>
            <person name="Gish W.R."/>
            <person name="Eddy S.R."/>
            <person name="McPherson J.D."/>
            <person name="Olson M.V."/>
            <person name="Eichler E.E."/>
            <person name="Green E.D."/>
            <person name="Waterston R.H."/>
            <person name="Wilson R.K."/>
        </authorList>
    </citation>
    <scope>NUCLEOTIDE SEQUENCE [LARGE SCALE GENOMIC DNA]</scope>
</reference>
<reference key="5">
    <citation type="journal article" date="2003" name="Science">
        <title>Human chromosome 7: DNA sequence and biology.</title>
        <authorList>
            <person name="Scherer S.W."/>
            <person name="Cheung J."/>
            <person name="MacDonald J.R."/>
            <person name="Osborne L.R."/>
            <person name="Nakabayashi K."/>
            <person name="Herbrick J.-A."/>
            <person name="Carson A.R."/>
            <person name="Parker-Katiraee L."/>
            <person name="Skaug J."/>
            <person name="Khaja R."/>
            <person name="Zhang J."/>
            <person name="Hudek A.K."/>
            <person name="Li M."/>
            <person name="Haddad M."/>
            <person name="Duggan G.E."/>
            <person name="Fernandez B.A."/>
            <person name="Kanematsu E."/>
            <person name="Gentles S."/>
            <person name="Christopoulos C.C."/>
            <person name="Choufani S."/>
            <person name="Kwasnicka D."/>
            <person name="Zheng X.H."/>
            <person name="Lai Z."/>
            <person name="Nusskern D.R."/>
            <person name="Zhang Q."/>
            <person name="Gu Z."/>
            <person name="Lu F."/>
            <person name="Zeesman S."/>
            <person name="Nowaczyk M.J."/>
            <person name="Teshima I."/>
            <person name="Chitayat D."/>
            <person name="Shuman C."/>
            <person name="Weksberg R."/>
            <person name="Zackai E.H."/>
            <person name="Grebe T.A."/>
            <person name="Cox S.R."/>
            <person name="Kirkpatrick S.J."/>
            <person name="Rahman N."/>
            <person name="Friedman J.M."/>
            <person name="Heng H.H.Q."/>
            <person name="Pelicci P.G."/>
            <person name="Lo-Coco F."/>
            <person name="Belloni E."/>
            <person name="Shaffer L.G."/>
            <person name="Pober B."/>
            <person name="Morton C.C."/>
            <person name="Gusella J.F."/>
            <person name="Bruns G.A.P."/>
            <person name="Korf B.R."/>
            <person name="Quade B.J."/>
            <person name="Ligon A.H."/>
            <person name="Ferguson H."/>
            <person name="Higgins A.W."/>
            <person name="Leach N.T."/>
            <person name="Herrick S.R."/>
            <person name="Lemyre E."/>
            <person name="Farra C.G."/>
            <person name="Kim H.-G."/>
            <person name="Summers A.M."/>
            <person name="Gripp K.W."/>
            <person name="Roberts W."/>
            <person name="Szatmari P."/>
            <person name="Winsor E.J.T."/>
            <person name="Grzeschik K.-H."/>
            <person name="Teebi A."/>
            <person name="Minassian B.A."/>
            <person name="Kere J."/>
            <person name="Armengol L."/>
            <person name="Pujana M.A."/>
            <person name="Estivill X."/>
            <person name="Wilson M.D."/>
            <person name="Koop B.F."/>
            <person name="Tosi S."/>
            <person name="Moore G.E."/>
            <person name="Boright A.P."/>
            <person name="Zlotorynski E."/>
            <person name="Kerem B."/>
            <person name="Kroisel P.M."/>
            <person name="Petek E."/>
            <person name="Oscier D.G."/>
            <person name="Mould S.J."/>
            <person name="Doehner H."/>
            <person name="Doehner K."/>
            <person name="Rommens J.M."/>
            <person name="Vincent J.B."/>
            <person name="Venter J.C."/>
            <person name="Li P.W."/>
            <person name="Mural R.J."/>
            <person name="Adams M.D."/>
            <person name="Tsui L.-C."/>
        </authorList>
    </citation>
    <scope>NUCLEOTIDE SEQUENCE [LARGE SCALE GENOMIC DNA]</scope>
</reference>
<reference key="6">
    <citation type="submission" date="2005-09" db="EMBL/GenBank/DDBJ databases">
        <authorList>
            <person name="Mural R.J."/>
            <person name="Istrail S."/>
            <person name="Sutton G.G."/>
            <person name="Florea L."/>
            <person name="Halpern A.L."/>
            <person name="Mobarry C.M."/>
            <person name="Lippert R."/>
            <person name="Walenz B."/>
            <person name="Shatkay H."/>
            <person name="Dew I."/>
            <person name="Miller J.R."/>
            <person name="Flanigan M.J."/>
            <person name="Edwards N.J."/>
            <person name="Bolanos R."/>
            <person name="Fasulo D."/>
            <person name="Halldorsson B.V."/>
            <person name="Hannenhalli S."/>
            <person name="Turner R."/>
            <person name="Yooseph S."/>
            <person name="Lu F."/>
            <person name="Nusskern D.R."/>
            <person name="Shue B.C."/>
            <person name="Zheng X.H."/>
            <person name="Zhong F."/>
            <person name="Delcher A.L."/>
            <person name="Huson D.H."/>
            <person name="Kravitz S.A."/>
            <person name="Mouchard L."/>
            <person name="Reinert K."/>
            <person name="Remington K.A."/>
            <person name="Clark A.G."/>
            <person name="Waterman M.S."/>
            <person name="Eichler E.E."/>
            <person name="Adams M.D."/>
            <person name="Hunkapiller M.W."/>
            <person name="Myers E.W."/>
            <person name="Venter J.C."/>
        </authorList>
    </citation>
    <scope>NUCLEOTIDE SEQUENCE [LARGE SCALE GENOMIC DNA]</scope>
</reference>
<reference key="7">
    <citation type="journal article" date="2004" name="Genome Res.">
        <title>The status, quality, and expansion of the NIH full-length cDNA project: the Mammalian Gene Collection (MGC).</title>
        <authorList>
            <consortium name="The MGC Project Team"/>
        </authorList>
    </citation>
    <scope>NUCLEOTIDE SEQUENCE [LARGE SCALE MRNA]</scope>
    <source>
        <tissue>Adrenal cortex</tissue>
    </source>
</reference>
<reference key="8">
    <citation type="journal article" date="2006" name="Genomics">
        <title>Fourteen novel human members of mitochondrial solute carrier family 25 (SLC25) widely expressed in the central nervous system.</title>
        <authorList>
            <person name="Haitina T."/>
            <person name="Lindblom J."/>
            <person name="Renstroem T."/>
            <person name="Fredriksson R."/>
        </authorList>
    </citation>
    <scope>IDENTIFICATION</scope>
</reference>
<reference key="9">
    <citation type="journal article" date="2015" name="Proteomics">
        <title>N-terminome analysis of the human mitochondrial proteome.</title>
        <authorList>
            <person name="Vaca Jacome A.S."/>
            <person name="Rabilloud T."/>
            <person name="Schaeffer-Reiss C."/>
            <person name="Rompais M."/>
            <person name="Ayoub D."/>
            <person name="Lane L."/>
            <person name="Bairoch A."/>
            <person name="Van Dorsselaer A."/>
            <person name="Carapito C."/>
        </authorList>
    </citation>
    <scope>IDENTIFICATION BY MASS SPECTROMETRY [LARGE SCALE ANALYSIS]</scope>
</reference>
<reference key="10">
    <citation type="journal article" date="2021" name="Nature">
        <title>SLC25A39 is necessary for mitochondrial glutathione import in mammalian cells.</title>
        <authorList>
            <person name="Wang Y."/>
            <person name="Yen F.S."/>
            <person name="Zhu X.G."/>
            <person name="Timson R.C."/>
            <person name="Weber R."/>
            <person name="Xing C."/>
            <person name="Liu Y."/>
            <person name="Allwein B."/>
            <person name="Luo H."/>
            <person name="Yeh H.W."/>
            <person name="Heissel S."/>
            <person name="Unlu G."/>
            <person name="Gamazon E.R."/>
            <person name="Kharas M.G."/>
            <person name="Hite R."/>
            <person name="Birsoy K."/>
        </authorList>
    </citation>
    <scope>FUNCTION</scope>
    <scope>TRANSPORTER ACTIVITY</scope>
</reference>
<reference key="11">
    <citation type="journal article" date="2017" name="Cancer Sci.">
        <title>Exome sequencing deciphers a germline MET mutation in familial epidermal growth factor receptor-mutant lung cancer.</title>
        <authorList>
            <person name="Tode N."/>
            <person name="Kikuchi T."/>
            <person name="Sakakibara T."/>
            <person name="Hirano T."/>
            <person name="Inoue A."/>
            <person name="Ohkouchi S."/>
            <person name="Tamada T."/>
            <person name="Okazaki T."/>
            <person name="Koarai A."/>
            <person name="Sugiura H."/>
            <person name="Niihori T."/>
            <person name="Aoki Y."/>
            <person name="Nakayama K."/>
            <person name="Matsumoto K."/>
            <person name="Matsubara Y."/>
            <person name="Yamamoto M."/>
            <person name="Watanabe A."/>
            <person name="Nukiwa T."/>
            <person name="Ichinose M."/>
        </authorList>
    </citation>
    <scope>VARIANT ASN-105</scope>
</reference>
<accession>Q8TBP6</accession>
<accession>A8K483</accession>
<accession>D6W5P6</accession>
<accession>Q53GB1</accession>
<accession>Q9UHR1</accession>
<sequence>MDPETRGQEIIKVTPLQQMLASCTGAILTSVIVTPLDVVKIRLQAQNNPLPKGKCFVYSNGLMDHLCVCEEGGNKLWYKKPGNFQGTLDAFFKIIRNEGIKSLWSGLPPTLVMAVPATVIYFTCYDQLSALLRSKLGENETCIPIVAGIVARFGAVTVISPLELIRTKMQSKKFSYVELHRFVSKKVSEDGWISLWRGWAPTVLRDVPFSAMYWYNYEILKKWLCEKSGLYEPTFMINFTSGALSGSFAAVATLPFDVVKTQKQTQLWTYESHKISMPLHMSTWIIMKNIVAKNGFSGLFSGLIPRLIKIAPACAIMISTYEFGKAFFQKQNVRRQQY</sequence>
<gene>
    <name evidence="6 10" type="primary">SLC25A40</name>
    <name evidence="7" type="synonym">MCFP</name>
</gene>
<comment type="function">
    <text evidence="1 5">Probable mitochondrial transporter required for glutathione import into mitochondria (PubMed:34707288). Glutathione, which plays key roles in oxidative metabolism, is produced exclusively in the cytosol and is imported in many organelles (PubMed:34707288). Mitochondrial glutathione is required for the activity and stability of proteins containing iron-sulfur clusters, as well as erythropoiesis (By similarity).</text>
</comment>
<comment type="catalytic activity">
    <reaction evidence="9">
        <text>glutathione(in) = glutathione(out)</text>
        <dbReference type="Rhea" id="RHEA:74819"/>
        <dbReference type="ChEBI" id="CHEBI:57925"/>
    </reaction>
</comment>
<comment type="interaction">
    <interactant intactId="EBI-16769620">
        <id>Q8TBP6</id>
    </interactant>
    <interactant intactId="EBI-982999">
        <id>P02452</id>
        <label>COL1A1</label>
    </interactant>
    <organismsDiffer>false</organismsDiffer>
    <experiments>2</experiments>
</comment>
<comment type="subcellular location">
    <subcellularLocation>
        <location evidence="2">Mitochondrion inner membrane</location>
        <topology evidence="3">Multi-pass membrane protein</topology>
    </subcellularLocation>
</comment>
<comment type="similarity">
    <text evidence="8">Belongs to the mitochondrial carrier (TC 2.A.29) family.</text>
</comment>
<dbReference type="EMBL" id="AF125531">
    <property type="protein sequence ID" value="AAF17225.1"/>
    <property type="molecule type" value="mRNA"/>
</dbReference>
<dbReference type="EMBL" id="AK223020">
    <property type="protein sequence ID" value="BAD96740.1"/>
    <property type="molecule type" value="mRNA"/>
</dbReference>
<dbReference type="EMBL" id="AK290848">
    <property type="protein sequence ID" value="BAF83537.1"/>
    <property type="molecule type" value="mRNA"/>
</dbReference>
<dbReference type="EMBL" id="AC003083">
    <property type="protein sequence ID" value="AAS07443.1"/>
    <property type="molecule type" value="Genomic_DNA"/>
</dbReference>
<dbReference type="EMBL" id="CH236949">
    <property type="protein sequence ID" value="EAL24171.1"/>
    <property type="molecule type" value="Genomic_DNA"/>
</dbReference>
<dbReference type="EMBL" id="CH471091">
    <property type="protein sequence ID" value="EAW76933.1"/>
    <property type="molecule type" value="Genomic_DNA"/>
</dbReference>
<dbReference type="EMBL" id="CH471091">
    <property type="protein sequence ID" value="EAW76935.1"/>
    <property type="molecule type" value="Genomic_DNA"/>
</dbReference>
<dbReference type="EMBL" id="BC027322">
    <property type="protein sequence ID" value="AAH27322.1"/>
    <property type="molecule type" value="mRNA"/>
</dbReference>
<dbReference type="CCDS" id="CCDS5610.1"/>
<dbReference type="RefSeq" id="NP_061331.2">
    <property type="nucleotide sequence ID" value="NM_018843.3"/>
</dbReference>
<dbReference type="SMR" id="Q8TBP6"/>
<dbReference type="BioGRID" id="121018">
    <property type="interactions" value="95"/>
</dbReference>
<dbReference type="FunCoup" id="Q8TBP6">
    <property type="interactions" value="1559"/>
</dbReference>
<dbReference type="IntAct" id="Q8TBP6">
    <property type="interactions" value="43"/>
</dbReference>
<dbReference type="STRING" id="9606.ENSP00000344831"/>
<dbReference type="TCDB" id="2.A.29.14.6">
    <property type="family name" value="the mitochondrial carrier (mc) family"/>
</dbReference>
<dbReference type="iPTMnet" id="Q8TBP6"/>
<dbReference type="PhosphoSitePlus" id="Q8TBP6"/>
<dbReference type="SwissPalm" id="Q8TBP6"/>
<dbReference type="BioMuta" id="SLC25A40"/>
<dbReference type="DMDM" id="74751387"/>
<dbReference type="jPOST" id="Q8TBP6"/>
<dbReference type="MassIVE" id="Q8TBP6"/>
<dbReference type="PaxDb" id="9606-ENSP00000344831"/>
<dbReference type="PeptideAtlas" id="Q8TBP6"/>
<dbReference type="ProteomicsDB" id="74037"/>
<dbReference type="Pumba" id="Q8TBP6"/>
<dbReference type="Antibodypedia" id="29759">
    <property type="antibodies" value="35 antibodies from 10 providers"/>
</dbReference>
<dbReference type="DNASU" id="55972"/>
<dbReference type="Ensembl" id="ENST00000341119.10">
    <property type="protein sequence ID" value="ENSP00000344831.5"/>
    <property type="gene ID" value="ENSG00000075303.13"/>
</dbReference>
<dbReference type="GeneID" id="55972"/>
<dbReference type="KEGG" id="hsa:55972"/>
<dbReference type="MANE-Select" id="ENST00000341119.10">
    <property type="protein sequence ID" value="ENSP00000344831.5"/>
    <property type="RefSeq nucleotide sequence ID" value="NM_018843.4"/>
    <property type="RefSeq protein sequence ID" value="NP_061331.2"/>
</dbReference>
<dbReference type="UCSC" id="uc003uje.4">
    <property type="organism name" value="human"/>
</dbReference>
<dbReference type="AGR" id="HGNC:29680"/>
<dbReference type="CTD" id="55972"/>
<dbReference type="DisGeNET" id="55972"/>
<dbReference type="GeneCards" id="SLC25A40"/>
<dbReference type="HGNC" id="HGNC:29680">
    <property type="gene designation" value="SLC25A40"/>
</dbReference>
<dbReference type="HPA" id="ENSG00000075303">
    <property type="expression patterns" value="Low tissue specificity"/>
</dbReference>
<dbReference type="MalaCards" id="SLC25A40"/>
<dbReference type="MIM" id="610821">
    <property type="type" value="gene"/>
</dbReference>
<dbReference type="neXtProt" id="NX_Q8TBP6"/>
<dbReference type="OpenTargets" id="ENSG00000075303"/>
<dbReference type="PharmGKB" id="PA162403655"/>
<dbReference type="VEuPathDB" id="HostDB:ENSG00000075303"/>
<dbReference type="eggNOG" id="KOG0761">
    <property type="taxonomic scope" value="Eukaryota"/>
</dbReference>
<dbReference type="GeneTree" id="ENSGT00940000160249"/>
<dbReference type="HOGENOM" id="CLU_015166_0_0_1"/>
<dbReference type="InParanoid" id="Q8TBP6"/>
<dbReference type="OMA" id="YWWGYES"/>
<dbReference type="OrthoDB" id="1747031at2759"/>
<dbReference type="PAN-GO" id="Q8TBP6">
    <property type="GO annotations" value="2 GO annotations based on evolutionary models"/>
</dbReference>
<dbReference type="PhylomeDB" id="Q8TBP6"/>
<dbReference type="TreeFam" id="TF314720"/>
<dbReference type="PathwayCommons" id="Q8TBP6"/>
<dbReference type="SignaLink" id="Q8TBP6"/>
<dbReference type="BioGRID-ORCS" id="55972">
    <property type="hits" value="39 hits in 1159 CRISPR screens"/>
</dbReference>
<dbReference type="ChiTaRS" id="SLC25A40">
    <property type="organism name" value="human"/>
</dbReference>
<dbReference type="GenomeRNAi" id="55972"/>
<dbReference type="Pharos" id="Q8TBP6">
    <property type="development level" value="Tdark"/>
</dbReference>
<dbReference type="PRO" id="PR:Q8TBP6"/>
<dbReference type="Proteomes" id="UP000005640">
    <property type="component" value="Chromosome 7"/>
</dbReference>
<dbReference type="RNAct" id="Q8TBP6">
    <property type="molecule type" value="protein"/>
</dbReference>
<dbReference type="Bgee" id="ENSG00000075303">
    <property type="expression patterns" value="Expressed in adrenal tissue and 172 other cell types or tissues"/>
</dbReference>
<dbReference type="ExpressionAtlas" id="Q8TBP6">
    <property type="expression patterns" value="baseline and differential"/>
</dbReference>
<dbReference type="GO" id="GO:0005743">
    <property type="term" value="C:mitochondrial inner membrane"/>
    <property type="evidence" value="ECO:0007669"/>
    <property type="project" value="UniProtKB-SubCell"/>
</dbReference>
<dbReference type="GO" id="GO:0005739">
    <property type="term" value="C:mitochondrion"/>
    <property type="evidence" value="ECO:0006056"/>
    <property type="project" value="FlyBase"/>
</dbReference>
<dbReference type="GO" id="GO:0034634">
    <property type="term" value="F:glutathione transmembrane transporter activity"/>
    <property type="evidence" value="ECO:0000315"/>
    <property type="project" value="UniProtKB"/>
</dbReference>
<dbReference type="GO" id="GO:0048821">
    <property type="term" value="P:erythrocyte development"/>
    <property type="evidence" value="ECO:0007669"/>
    <property type="project" value="Ensembl"/>
</dbReference>
<dbReference type="GO" id="GO:0170036">
    <property type="term" value="P:import into the mitochondrion"/>
    <property type="evidence" value="ECO:0000318"/>
    <property type="project" value="GO_Central"/>
</dbReference>
<dbReference type="FunFam" id="1.50.40.10:FF:000141">
    <property type="entry name" value="Mitochondrial carrier protein MTM1"/>
    <property type="match status" value="1"/>
</dbReference>
<dbReference type="Gene3D" id="1.50.40.10">
    <property type="entry name" value="Mitochondrial carrier domain"/>
    <property type="match status" value="1"/>
</dbReference>
<dbReference type="InterPro" id="IPR002067">
    <property type="entry name" value="Mit_carrier"/>
</dbReference>
<dbReference type="InterPro" id="IPR018108">
    <property type="entry name" value="Mitochondrial_sb/sol_carrier"/>
</dbReference>
<dbReference type="InterPro" id="IPR023395">
    <property type="entry name" value="Mt_carrier_dom_sf"/>
</dbReference>
<dbReference type="InterPro" id="IPR045315">
    <property type="entry name" value="Mtm1-like"/>
</dbReference>
<dbReference type="PANTHER" id="PTHR45760">
    <property type="entry name" value="FI19922P1-RELATED"/>
    <property type="match status" value="1"/>
</dbReference>
<dbReference type="PANTHER" id="PTHR45760:SF5">
    <property type="entry name" value="MITOCHONDRIAL GLUTATHIONE TRANSPORTER SLC25A40-RELATED"/>
    <property type="match status" value="1"/>
</dbReference>
<dbReference type="Pfam" id="PF00153">
    <property type="entry name" value="Mito_carr"/>
    <property type="match status" value="3"/>
</dbReference>
<dbReference type="PRINTS" id="PR00926">
    <property type="entry name" value="MITOCARRIER"/>
</dbReference>
<dbReference type="SUPFAM" id="SSF103506">
    <property type="entry name" value="Mitochondrial carrier"/>
    <property type="match status" value="1"/>
</dbReference>
<dbReference type="PROSITE" id="PS50920">
    <property type="entry name" value="SOLCAR"/>
    <property type="match status" value="3"/>
</dbReference>
<feature type="chain" id="PRO_0000291809" description="Mitochondrial glutathione transporter SLC25A40">
    <location>
        <begin position="1"/>
        <end position="338"/>
    </location>
</feature>
<feature type="transmembrane region" description="Helical; Name=1" evidence="3">
    <location>
        <begin position="19"/>
        <end position="39"/>
    </location>
</feature>
<feature type="transmembrane region" description="Helical; Name=2" evidence="3">
    <location>
        <begin position="103"/>
        <end position="123"/>
    </location>
</feature>
<feature type="transmembrane region" description="Helical; Name=3" evidence="3">
    <location>
        <begin position="142"/>
        <end position="162"/>
    </location>
</feature>
<feature type="transmembrane region" description="Helical; Name=4" evidence="3">
    <location>
        <begin position="199"/>
        <end position="220"/>
    </location>
</feature>
<feature type="transmembrane region" description="Helical; Name=5" evidence="3">
    <location>
        <begin position="239"/>
        <end position="259"/>
    </location>
</feature>
<feature type="transmembrane region" description="Helical; Name=6" evidence="3">
    <location>
        <begin position="298"/>
        <end position="318"/>
    </location>
</feature>
<feature type="repeat" description="Solcar 1">
    <location>
        <begin position="13"/>
        <end position="131"/>
    </location>
</feature>
<feature type="repeat" description="Solcar 2">
    <location>
        <begin position="139"/>
        <end position="223"/>
    </location>
</feature>
<feature type="repeat" description="Solcar 3">
    <location>
        <begin position="233"/>
        <end position="327"/>
    </location>
</feature>
<feature type="sequence variant" id="VAR_079372" description="In dbSNP:rs200954020." evidence="4">
    <original>S</original>
    <variation>N</variation>
    <location>
        <position position="105"/>
    </location>
</feature>
<feature type="sequence variant" id="VAR_032863" description="In dbSNP:rs724665.">
    <original>T</original>
    <variation>I</variation>
    <location>
        <position position="123"/>
    </location>
</feature>
<feature type="sequence variant" id="VAR_032864" description="In dbSNP:rs3213633.">
    <original>K</original>
    <variation>Q</variation>
    <location>
        <position position="186"/>
    </location>
</feature>
<feature type="sequence conflict" description="In Ref. 3; BAD96740." evidence="8" ref="3">
    <original>E</original>
    <variation>K</variation>
    <location>
        <position position="71"/>
    </location>
</feature>
<feature type="sequence conflict" description="In Ref. 1; AAF17225." evidence="8" ref="1">
    <original>P</original>
    <variation>Q</variation>
    <location>
        <position position="161"/>
    </location>
</feature>
<evidence type="ECO:0000250" key="1">
    <source>
        <dbReference type="UniProtKB" id="Q8BGP6"/>
    </source>
</evidence>
<evidence type="ECO:0000250" key="2">
    <source>
        <dbReference type="UniProtKB" id="Q9BZJ4"/>
    </source>
</evidence>
<evidence type="ECO:0000255" key="3"/>
<evidence type="ECO:0000269" key="4">
    <source>
    </source>
</evidence>
<evidence type="ECO:0000269" key="5">
    <source>
    </source>
</evidence>
<evidence type="ECO:0000303" key="6">
    <source>
    </source>
</evidence>
<evidence type="ECO:0000303" key="7">
    <source ref="1"/>
</evidence>
<evidence type="ECO:0000305" key="8"/>
<evidence type="ECO:0000305" key="9">
    <source>
    </source>
</evidence>
<evidence type="ECO:0000312" key="10">
    <source>
        <dbReference type="HGNC" id="HGNC:29680"/>
    </source>
</evidence>
<proteinExistence type="evidence at protein level"/>
<name>S2540_HUMAN</name>
<keyword id="KW-0472">Membrane</keyword>
<keyword id="KW-0496">Mitochondrion</keyword>
<keyword id="KW-0999">Mitochondrion inner membrane</keyword>
<keyword id="KW-1267">Proteomics identification</keyword>
<keyword id="KW-1185">Reference proteome</keyword>
<keyword id="KW-0677">Repeat</keyword>
<keyword id="KW-0812">Transmembrane</keyword>
<keyword id="KW-1133">Transmembrane helix</keyword>
<keyword id="KW-0813">Transport</keyword>
<protein>
    <recommendedName>
        <fullName evidence="8">Mitochondrial glutathione transporter SLC25A40</fullName>
    </recommendedName>
    <alternativeName>
        <fullName evidence="7">Mitochondrial carrier family protein</fullName>
    </alternativeName>
    <alternativeName>
        <fullName>Solute carrier family 25 member 40</fullName>
    </alternativeName>
</protein>
<organism>
    <name type="scientific">Homo sapiens</name>
    <name type="common">Human</name>
    <dbReference type="NCBI Taxonomy" id="9606"/>
    <lineage>
        <taxon>Eukaryota</taxon>
        <taxon>Metazoa</taxon>
        <taxon>Chordata</taxon>
        <taxon>Craniata</taxon>
        <taxon>Vertebrata</taxon>
        <taxon>Euteleostomi</taxon>
        <taxon>Mammalia</taxon>
        <taxon>Eutheria</taxon>
        <taxon>Euarchontoglires</taxon>
        <taxon>Primates</taxon>
        <taxon>Haplorrhini</taxon>
        <taxon>Catarrhini</taxon>
        <taxon>Hominidae</taxon>
        <taxon>Homo</taxon>
    </lineage>
</organism>